<gene>
    <name evidence="1" type="primary">cheD</name>
    <name type="ordered locus">Caul_0284</name>
</gene>
<accession>B0T4C1</accession>
<comment type="function">
    <text evidence="1">Probably deamidates glutamine residues to glutamate on methyl-accepting chemotaxis receptors (MCPs), playing an important role in chemotaxis.</text>
</comment>
<comment type="catalytic activity">
    <reaction evidence="1">
        <text>L-glutaminyl-[protein] + H2O = L-glutamyl-[protein] + NH4(+)</text>
        <dbReference type="Rhea" id="RHEA:16441"/>
        <dbReference type="Rhea" id="RHEA-COMP:10207"/>
        <dbReference type="Rhea" id="RHEA-COMP:10208"/>
        <dbReference type="ChEBI" id="CHEBI:15377"/>
        <dbReference type="ChEBI" id="CHEBI:28938"/>
        <dbReference type="ChEBI" id="CHEBI:29973"/>
        <dbReference type="ChEBI" id="CHEBI:30011"/>
        <dbReference type="EC" id="3.5.1.44"/>
    </reaction>
</comment>
<comment type="similarity">
    <text evidence="1">Belongs to the CheD family.</text>
</comment>
<protein>
    <recommendedName>
        <fullName evidence="1">Probable chemoreceptor glutamine deamidase CheD</fullName>
        <ecNumber evidence="1">3.5.1.44</ecNumber>
    </recommendedName>
</protein>
<feature type="chain" id="PRO_1000184922" description="Probable chemoreceptor glutamine deamidase CheD">
    <location>
        <begin position="1"/>
        <end position="188"/>
    </location>
</feature>
<proteinExistence type="inferred from homology"/>
<name>CHED_CAUSK</name>
<organism>
    <name type="scientific">Caulobacter sp. (strain K31)</name>
    <dbReference type="NCBI Taxonomy" id="366602"/>
    <lineage>
        <taxon>Bacteria</taxon>
        <taxon>Pseudomonadati</taxon>
        <taxon>Pseudomonadota</taxon>
        <taxon>Alphaproteobacteria</taxon>
        <taxon>Caulobacterales</taxon>
        <taxon>Caulobacteraceae</taxon>
        <taxon>Caulobacter</taxon>
    </lineage>
</organism>
<reference key="1">
    <citation type="submission" date="2008-01" db="EMBL/GenBank/DDBJ databases">
        <title>Complete sequence of chromosome of Caulobacter sp. K31.</title>
        <authorList>
            <consortium name="US DOE Joint Genome Institute"/>
            <person name="Copeland A."/>
            <person name="Lucas S."/>
            <person name="Lapidus A."/>
            <person name="Barry K."/>
            <person name="Glavina del Rio T."/>
            <person name="Dalin E."/>
            <person name="Tice H."/>
            <person name="Pitluck S."/>
            <person name="Bruce D."/>
            <person name="Goodwin L."/>
            <person name="Thompson L.S."/>
            <person name="Brettin T."/>
            <person name="Detter J.C."/>
            <person name="Han C."/>
            <person name="Schmutz J."/>
            <person name="Larimer F."/>
            <person name="Land M."/>
            <person name="Hauser L."/>
            <person name="Kyrpides N."/>
            <person name="Kim E."/>
            <person name="Stephens C."/>
            <person name="Richardson P."/>
        </authorList>
    </citation>
    <scope>NUCLEOTIDE SEQUENCE [LARGE SCALE GENOMIC DNA]</scope>
    <source>
        <strain>K31</strain>
    </source>
</reference>
<sequence length="188" mass="19773">MMGQAHAEDSGPAIKVHVTQGESHVSADPQVVMTTVLGSCIAACLRDPTTGIGGMNHFLLPDSGDRKDGGDAVRYGAYAMELLINGLLKKGARRDRLEAKIFGGGKLFDGLSDVGASNAAFAERFLRDEGIPIVSSSTGGLSARRVEFWPASGRVRQRLVAVDNAPAEVRRPTPAVAPTANSGDLELF</sequence>
<evidence type="ECO:0000255" key="1">
    <source>
        <dbReference type="HAMAP-Rule" id="MF_01440"/>
    </source>
</evidence>
<keyword id="KW-0145">Chemotaxis</keyword>
<keyword id="KW-0378">Hydrolase</keyword>
<dbReference type="EC" id="3.5.1.44" evidence="1"/>
<dbReference type="EMBL" id="CP000927">
    <property type="protein sequence ID" value="ABZ69421.1"/>
    <property type="molecule type" value="Genomic_DNA"/>
</dbReference>
<dbReference type="SMR" id="B0T4C1"/>
<dbReference type="STRING" id="366602.Caul_0284"/>
<dbReference type="KEGG" id="cak:Caul_0284"/>
<dbReference type="eggNOG" id="COG1871">
    <property type="taxonomic scope" value="Bacteria"/>
</dbReference>
<dbReference type="HOGENOM" id="CLU_087854_0_1_5"/>
<dbReference type="GO" id="GO:0050568">
    <property type="term" value="F:protein-glutamine glutaminase activity"/>
    <property type="evidence" value="ECO:0007669"/>
    <property type="project" value="UniProtKB-UniRule"/>
</dbReference>
<dbReference type="GO" id="GO:0006935">
    <property type="term" value="P:chemotaxis"/>
    <property type="evidence" value="ECO:0007669"/>
    <property type="project" value="UniProtKB-UniRule"/>
</dbReference>
<dbReference type="CDD" id="cd16352">
    <property type="entry name" value="CheD"/>
    <property type="match status" value="1"/>
</dbReference>
<dbReference type="Gene3D" id="3.30.1330.200">
    <property type="match status" value="1"/>
</dbReference>
<dbReference type="HAMAP" id="MF_01440">
    <property type="entry name" value="CheD"/>
    <property type="match status" value="1"/>
</dbReference>
<dbReference type="InterPro" id="IPR038592">
    <property type="entry name" value="CheD-like_sf"/>
</dbReference>
<dbReference type="InterPro" id="IPR005659">
    <property type="entry name" value="Chemorcpt_Glu_NH3ase_CheD"/>
</dbReference>
<dbReference type="InterPro" id="IPR011324">
    <property type="entry name" value="Cytotoxic_necrot_fac-like_cat"/>
</dbReference>
<dbReference type="PANTHER" id="PTHR35147">
    <property type="entry name" value="CHEMORECEPTOR GLUTAMINE DEAMIDASE CHED-RELATED"/>
    <property type="match status" value="1"/>
</dbReference>
<dbReference type="PANTHER" id="PTHR35147:SF2">
    <property type="entry name" value="CHEMORECEPTOR GLUTAMINE DEAMIDASE CHED-RELATED"/>
    <property type="match status" value="1"/>
</dbReference>
<dbReference type="Pfam" id="PF03975">
    <property type="entry name" value="CheD"/>
    <property type="match status" value="1"/>
</dbReference>
<dbReference type="SUPFAM" id="SSF64438">
    <property type="entry name" value="CNF1/YfiH-like putative cysteine hydrolases"/>
    <property type="match status" value="1"/>
</dbReference>